<geneLocation type="chloroplast"/>
<feature type="chain" id="PRO_0000275909" description="NAD(P)H-quinone oxidoreductase chain 4, chloroplastic">
    <location>
        <begin position="1"/>
        <end position="500"/>
    </location>
</feature>
<feature type="transmembrane region" description="Helical" evidence="1">
    <location>
        <begin position="4"/>
        <end position="24"/>
    </location>
</feature>
<feature type="transmembrane region" description="Helical" evidence="1">
    <location>
        <begin position="31"/>
        <end position="51"/>
    </location>
</feature>
<feature type="transmembrane region" description="Helical" evidence="1">
    <location>
        <begin position="87"/>
        <end position="107"/>
    </location>
</feature>
<feature type="transmembrane region" description="Helical" evidence="1">
    <location>
        <begin position="113"/>
        <end position="130"/>
    </location>
</feature>
<feature type="transmembrane region" description="Helical" evidence="1">
    <location>
        <begin position="134"/>
        <end position="154"/>
    </location>
</feature>
<feature type="transmembrane region" description="Helical" evidence="1">
    <location>
        <begin position="167"/>
        <end position="187"/>
    </location>
</feature>
<feature type="transmembrane region" description="Helical" evidence="1">
    <location>
        <begin position="208"/>
        <end position="228"/>
    </location>
</feature>
<feature type="transmembrane region" description="Helical" evidence="1">
    <location>
        <begin position="242"/>
        <end position="262"/>
    </location>
</feature>
<feature type="transmembrane region" description="Helical" evidence="1">
    <location>
        <begin position="272"/>
        <end position="292"/>
    </location>
</feature>
<feature type="transmembrane region" description="Helical" evidence="1">
    <location>
        <begin position="305"/>
        <end position="325"/>
    </location>
</feature>
<feature type="transmembrane region" description="Helical" evidence="1">
    <location>
        <begin position="330"/>
        <end position="350"/>
    </location>
</feature>
<feature type="transmembrane region" description="Helical" evidence="1">
    <location>
        <begin position="386"/>
        <end position="406"/>
    </location>
</feature>
<feature type="transmembrane region" description="Helical" evidence="1">
    <location>
        <begin position="416"/>
        <end position="436"/>
    </location>
</feature>
<feature type="transmembrane region" description="Helical" evidence="1">
    <location>
        <begin position="462"/>
        <end position="482"/>
    </location>
</feature>
<evidence type="ECO:0000255" key="1">
    <source>
        <dbReference type="HAMAP-Rule" id="MF_00491"/>
    </source>
</evidence>
<comment type="catalytic activity">
    <reaction evidence="1">
        <text>a plastoquinone + NADH + (n+1) H(+)(in) = a plastoquinol + NAD(+) + n H(+)(out)</text>
        <dbReference type="Rhea" id="RHEA:42608"/>
        <dbReference type="Rhea" id="RHEA-COMP:9561"/>
        <dbReference type="Rhea" id="RHEA-COMP:9562"/>
        <dbReference type="ChEBI" id="CHEBI:15378"/>
        <dbReference type="ChEBI" id="CHEBI:17757"/>
        <dbReference type="ChEBI" id="CHEBI:57540"/>
        <dbReference type="ChEBI" id="CHEBI:57945"/>
        <dbReference type="ChEBI" id="CHEBI:62192"/>
    </reaction>
</comment>
<comment type="catalytic activity">
    <reaction evidence="1">
        <text>a plastoquinone + NADPH + (n+1) H(+)(in) = a plastoquinol + NADP(+) + n H(+)(out)</text>
        <dbReference type="Rhea" id="RHEA:42612"/>
        <dbReference type="Rhea" id="RHEA-COMP:9561"/>
        <dbReference type="Rhea" id="RHEA-COMP:9562"/>
        <dbReference type="ChEBI" id="CHEBI:15378"/>
        <dbReference type="ChEBI" id="CHEBI:17757"/>
        <dbReference type="ChEBI" id="CHEBI:57783"/>
        <dbReference type="ChEBI" id="CHEBI:58349"/>
        <dbReference type="ChEBI" id="CHEBI:62192"/>
    </reaction>
</comment>
<comment type="subcellular location">
    <subcellularLocation>
        <location evidence="1">Plastid</location>
        <location evidence="1">Chloroplast thylakoid membrane</location>
        <topology evidence="1">Multi-pass membrane protein</topology>
    </subcellularLocation>
</comment>
<comment type="similarity">
    <text evidence="1">Belongs to the complex I subunit 4 family.</text>
</comment>
<gene>
    <name evidence="1" type="primary">ndhD</name>
</gene>
<organism>
    <name type="scientific">Gossypium barbadense</name>
    <name type="common">Sea Island cotton</name>
    <name type="synonym">Hibiscus barbadensis</name>
    <dbReference type="NCBI Taxonomy" id="3634"/>
    <lineage>
        <taxon>Eukaryota</taxon>
        <taxon>Viridiplantae</taxon>
        <taxon>Streptophyta</taxon>
        <taxon>Embryophyta</taxon>
        <taxon>Tracheophyta</taxon>
        <taxon>Spermatophyta</taxon>
        <taxon>Magnoliopsida</taxon>
        <taxon>eudicotyledons</taxon>
        <taxon>Gunneridae</taxon>
        <taxon>Pentapetalae</taxon>
        <taxon>rosids</taxon>
        <taxon>malvids</taxon>
        <taxon>Malvales</taxon>
        <taxon>Malvaceae</taxon>
        <taxon>Malvoideae</taxon>
        <taxon>Gossypium</taxon>
    </lineage>
</organism>
<sequence length="500" mass="56263">MNYFPWLTIIVFLPISAGSLLFFLPHKGNKLIKWYTICICILELLLTTYAFCYHFRLDDPLIQLAEDYKWINFFDFYWRLGIDGLSIGPILLTGFITTLATLAAWPVTRDSRLFHFLMLAMYSGQIGSFSSRDLLLFFIMWEFELIPVYLLLSMWGGKKRLYSATKFILYTAGGSVFLLIGVLGLGLYGSNEPTLNFETLANQSYPVALEIIFYIGFLIAFAVKSPIIPLHTWLPDTHGEAHYSTCMLLAGILLKMGAYGLVRINMELLPHAHSIFSPWLIIVGTMQIIYAASTSLGQRNLKKRIAYSSVSHMGFIIIGIGSITDTGLNGAILQIISHGFIGAALFFLAGTSYDRMRLVYLDEMGGMAVSIPKIFTMFSILSMASLALPGMSGFVAELIVFFGIITSQKYFLMPKILITFVMAIGMILTPIYSLSMSRQMFYGYKLFNAPSSYFFDSGPRELFVSISIFLPVIGIGIYPDFVLSLSGEKVETILYNYFYR</sequence>
<protein>
    <recommendedName>
        <fullName evidence="1">NAD(P)H-quinone oxidoreductase chain 4, chloroplastic</fullName>
        <ecNumber evidence="1">7.1.1.-</ecNumber>
    </recommendedName>
    <alternativeName>
        <fullName evidence="1">NAD(P)H dehydrogenase, chain 4</fullName>
    </alternativeName>
    <alternativeName>
        <fullName evidence="1">NADH-plastoquinone oxidoreductase chain 4</fullName>
    </alternativeName>
</protein>
<reference key="1">
    <citation type="journal article" date="2006" name="Genes Genet. Syst.">
        <title>Complete nucleotide sequence of the cotton (Gossypium barbadense L.) chloroplast genome with a comparative analysis of sequences among 9 dicot plants.</title>
        <authorList>
            <person name="Ibrahim R.I.H."/>
            <person name="Azuma J."/>
            <person name="Sakamoto M."/>
        </authorList>
    </citation>
    <scope>NUCLEOTIDE SEQUENCE [LARGE SCALE GENOMIC DNA]</scope>
</reference>
<accession>A0ZZ85</accession>
<name>NU4C_GOSBA</name>
<proteinExistence type="inferred from homology"/>
<dbReference type="EC" id="7.1.1.-" evidence="1"/>
<dbReference type="EMBL" id="AP009123">
    <property type="protein sequence ID" value="BAF41297.1"/>
    <property type="molecule type" value="Genomic_DNA"/>
</dbReference>
<dbReference type="RefSeq" id="YP_913236.1">
    <property type="nucleotide sequence ID" value="NC_008641.1"/>
</dbReference>
<dbReference type="SMR" id="A0ZZ85"/>
<dbReference type="GeneID" id="4575197"/>
<dbReference type="GO" id="GO:0009535">
    <property type="term" value="C:chloroplast thylakoid membrane"/>
    <property type="evidence" value="ECO:0007669"/>
    <property type="project" value="UniProtKB-SubCell"/>
</dbReference>
<dbReference type="GO" id="GO:0008137">
    <property type="term" value="F:NADH dehydrogenase (ubiquinone) activity"/>
    <property type="evidence" value="ECO:0007669"/>
    <property type="project" value="InterPro"/>
</dbReference>
<dbReference type="GO" id="GO:0048039">
    <property type="term" value="F:ubiquinone binding"/>
    <property type="evidence" value="ECO:0007669"/>
    <property type="project" value="TreeGrafter"/>
</dbReference>
<dbReference type="GO" id="GO:0042773">
    <property type="term" value="P:ATP synthesis coupled electron transport"/>
    <property type="evidence" value="ECO:0007669"/>
    <property type="project" value="InterPro"/>
</dbReference>
<dbReference type="GO" id="GO:0015990">
    <property type="term" value="P:electron transport coupled proton transport"/>
    <property type="evidence" value="ECO:0007669"/>
    <property type="project" value="TreeGrafter"/>
</dbReference>
<dbReference type="HAMAP" id="MF_00491">
    <property type="entry name" value="NDH1_NuoM"/>
    <property type="match status" value="1"/>
</dbReference>
<dbReference type="InterPro" id="IPR022997">
    <property type="entry name" value="NADH_Q_OxRdtase_chain4"/>
</dbReference>
<dbReference type="InterPro" id="IPR010227">
    <property type="entry name" value="NADH_Q_OxRdtase_chainM/4"/>
</dbReference>
<dbReference type="InterPro" id="IPR003918">
    <property type="entry name" value="NADH_UbQ_OxRdtase"/>
</dbReference>
<dbReference type="InterPro" id="IPR001750">
    <property type="entry name" value="ND/Mrp_TM"/>
</dbReference>
<dbReference type="NCBIfam" id="TIGR01972">
    <property type="entry name" value="NDH_I_M"/>
    <property type="match status" value="1"/>
</dbReference>
<dbReference type="PANTHER" id="PTHR43507:SF21">
    <property type="entry name" value="NAD(P)H-QUINONE OXIDOREDUCTASE CHAIN 4, CHLOROPLASTIC"/>
    <property type="match status" value="1"/>
</dbReference>
<dbReference type="PANTHER" id="PTHR43507">
    <property type="entry name" value="NADH-UBIQUINONE OXIDOREDUCTASE CHAIN 4"/>
    <property type="match status" value="1"/>
</dbReference>
<dbReference type="Pfam" id="PF00361">
    <property type="entry name" value="Proton_antipo_M"/>
    <property type="match status" value="1"/>
</dbReference>
<dbReference type="PRINTS" id="PR01437">
    <property type="entry name" value="NUOXDRDTASE4"/>
</dbReference>
<keyword id="KW-0150">Chloroplast</keyword>
<keyword id="KW-0472">Membrane</keyword>
<keyword id="KW-0520">NAD</keyword>
<keyword id="KW-0521">NADP</keyword>
<keyword id="KW-0934">Plastid</keyword>
<keyword id="KW-0618">Plastoquinone</keyword>
<keyword id="KW-0874">Quinone</keyword>
<keyword id="KW-0793">Thylakoid</keyword>
<keyword id="KW-1278">Translocase</keyword>
<keyword id="KW-0812">Transmembrane</keyword>
<keyword id="KW-1133">Transmembrane helix</keyword>